<gene>
    <name type="ordered locus">AF_0064</name>
</gene>
<protein>
    <recommendedName>
        <fullName>Uncharacterized protein AF_0064</fullName>
    </recommendedName>
</protein>
<feature type="chain" id="PRO_0000127819" description="Uncharacterized protein AF_0064">
    <location>
        <begin position="1"/>
        <end position="220"/>
    </location>
</feature>
<organism>
    <name type="scientific">Archaeoglobus fulgidus (strain ATCC 49558 / DSM 4304 / JCM 9628 / NBRC 100126 / VC-16)</name>
    <dbReference type="NCBI Taxonomy" id="224325"/>
    <lineage>
        <taxon>Archaea</taxon>
        <taxon>Methanobacteriati</taxon>
        <taxon>Methanobacteriota</taxon>
        <taxon>Archaeoglobi</taxon>
        <taxon>Archaeoglobales</taxon>
        <taxon>Archaeoglobaceae</taxon>
        <taxon>Archaeoglobus</taxon>
    </lineage>
</organism>
<keyword id="KW-1185">Reference proteome</keyword>
<accession>O30172</accession>
<dbReference type="EMBL" id="AE000782">
    <property type="protein sequence ID" value="AAB91171.1"/>
    <property type="molecule type" value="Genomic_DNA"/>
</dbReference>
<dbReference type="PIR" id="H69257">
    <property type="entry name" value="H69257"/>
</dbReference>
<dbReference type="STRING" id="224325.AF_0064"/>
<dbReference type="PaxDb" id="224325-AF_0064"/>
<dbReference type="EnsemblBacteria" id="AAB91171">
    <property type="protein sequence ID" value="AAB91171"/>
    <property type="gene ID" value="AF_0064"/>
</dbReference>
<dbReference type="KEGG" id="afu:AF_0064"/>
<dbReference type="HOGENOM" id="CLU_1253512_0_0_2"/>
<dbReference type="Proteomes" id="UP000002199">
    <property type="component" value="Chromosome"/>
</dbReference>
<reference key="1">
    <citation type="journal article" date="1997" name="Nature">
        <title>The complete genome sequence of the hyperthermophilic, sulphate-reducing archaeon Archaeoglobus fulgidus.</title>
        <authorList>
            <person name="Klenk H.-P."/>
            <person name="Clayton R.A."/>
            <person name="Tomb J.-F."/>
            <person name="White O."/>
            <person name="Nelson K.E."/>
            <person name="Ketchum K.A."/>
            <person name="Dodson R.J."/>
            <person name="Gwinn M.L."/>
            <person name="Hickey E.K."/>
            <person name="Peterson J.D."/>
            <person name="Richardson D.L."/>
            <person name="Kerlavage A.R."/>
            <person name="Graham D.E."/>
            <person name="Kyrpides N.C."/>
            <person name="Fleischmann R.D."/>
            <person name="Quackenbush J."/>
            <person name="Lee N.H."/>
            <person name="Sutton G.G."/>
            <person name="Gill S.R."/>
            <person name="Kirkness E.F."/>
            <person name="Dougherty B.A."/>
            <person name="McKenney K."/>
            <person name="Adams M.D."/>
            <person name="Loftus B.J."/>
            <person name="Peterson S.N."/>
            <person name="Reich C.I."/>
            <person name="McNeil L.K."/>
            <person name="Badger J.H."/>
            <person name="Glodek A."/>
            <person name="Zhou L."/>
            <person name="Overbeek R."/>
            <person name="Gocayne J.D."/>
            <person name="Weidman J.F."/>
            <person name="McDonald L.A."/>
            <person name="Utterback T.R."/>
            <person name="Cotton M.D."/>
            <person name="Spriggs T."/>
            <person name="Artiach P."/>
            <person name="Kaine B.P."/>
            <person name="Sykes S.M."/>
            <person name="Sadow P.W."/>
            <person name="D'Andrea K.P."/>
            <person name="Bowman C."/>
            <person name="Fujii C."/>
            <person name="Garland S.A."/>
            <person name="Mason T.M."/>
            <person name="Olsen G.J."/>
            <person name="Fraser C.M."/>
            <person name="Smith H.O."/>
            <person name="Woese C.R."/>
            <person name="Venter J.C."/>
        </authorList>
    </citation>
    <scope>NUCLEOTIDE SEQUENCE [LARGE SCALE GENOMIC DNA]</scope>
    <source>
        <strain>ATCC 49558 / DSM 4304 / JCM 9628 / NBRC 100126 / VC-16</strain>
    </source>
</reference>
<name>Y064_ARCFU</name>
<sequence>MIDELLCLNNLVISVESNKNLRNDDCGNSASIIPSSMASRIFSQYSAFFSVFYGDENVCVGTDSWSLTHSITLFVPLISEPPLEFYTFFSNGLTRLQNVLQSFSAYLDEDLSTLNSENNFHRWQWLSLQKSIPSILSSYCYQKILVNQSKQRSNITSANPHPLNPIHPVKVGILRDYHTHPMSPHARKMQRVRGFEVVSKHELLHEVVILSFNRNNPEKA</sequence>
<proteinExistence type="predicted"/>